<comment type="interaction">
    <interactant intactId="EBI-15193845">
        <id>P59467</id>
    </interactant>
    <interactant intactId="EBI-15198991">
        <id>Q8LBW3</id>
        <label>LBD12</label>
    </interactant>
    <organismsDiffer>false</organismsDiffer>
    <experiments>3</experiments>
</comment>
<comment type="interaction">
    <interactant intactId="EBI-15193845">
        <id>P59467</id>
    </interactant>
    <interactant intactId="EBI-15212656">
        <id>O22131</id>
        <label>LBD18</label>
    </interactant>
    <organismsDiffer>false</organismsDiffer>
    <experiments>3</experiments>
</comment>
<comment type="interaction">
    <interactant intactId="EBI-15193845">
        <id>P59467</id>
    </interactant>
    <interactant intactId="EBI-4445715">
        <id>Q9SHE9</id>
        <label>LBD4</label>
    </interactant>
    <organismsDiffer>false</organismsDiffer>
    <experiments>3</experiments>
</comment>
<comment type="similarity">
    <text evidence="2">Belongs to the LOB domain-containing protein family.</text>
</comment>
<gene>
    <name type="primary">LBD23</name>
    <name type="synonym">ASL14</name>
    <name type="ordered locus">At3g26620</name>
    <name type="ORF">MLJ15.1</name>
</gene>
<sequence length="121" mass="13692">MNPKRCAACKYLRRRCPKDCVFSPYFPPNDPQKFACVHRIYGAGNVSKMLQQLPDQTRAEAVESLCFEAKCRVDDPVYGCVGIIHLLKTQIQKTQNELAKTQAEIAVAQTKLSQTHISDFM</sequence>
<accession>P59467</accession>
<accession>B7XG68</accession>
<accession>Q4PSM7</accession>
<evidence type="ECO:0000255" key="1">
    <source>
        <dbReference type="PROSITE-ProRule" id="PRU00291"/>
    </source>
</evidence>
<evidence type="ECO:0000305" key="2"/>
<name>LBD23_ARATH</name>
<keyword id="KW-1185">Reference proteome</keyword>
<feature type="chain" id="PRO_0000132274" description="LOB domain-containing protein 23">
    <location>
        <begin position="1"/>
        <end position="121"/>
    </location>
</feature>
<feature type="domain" description="LOB" evidence="1">
    <location>
        <begin position="4"/>
        <end position="105"/>
    </location>
</feature>
<reference key="1">
    <citation type="journal article" date="2009" name="Plant J.">
        <title>Characterization of genes in the ASYMMETRIC LEAVES2/LATERAL ORGAN BOUNDARIES (AS2/LOB) family in Arabidopsis thaliana, and functional and molecular comparisons between AS2 and other family members.</title>
        <authorList>
            <person name="Matsumura Y."/>
            <person name="Iwakawa H."/>
            <person name="Machida Y."/>
            <person name="Machida C."/>
        </authorList>
    </citation>
    <scope>NUCLEOTIDE SEQUENCE [MRNA]</scope>
    <source>
        <strain>cv. Columbia</strain>
    </source>
</reference>
<reference key="2">
    <citation type="journal article" date="1996" name="Nucleic Acids Res.">
        <title>Sequence analysis of an 81 kb contig from Arabidopsis thaliana chromosome III.</title>
        <authorList>
            <person name="Quigley F."/>
            <person name="Dao P."/>
            <person name="Cottet A."/>
            <person name="Mache R."/>
        </authorList>
    </citation>
    <scope>NUCLEOTIDE SEQUENCE [GENOMIC DNA]</scope>
    <source>
        <strain>cv. Columbia</strain>
    </source>
</reference>
<reference key="3">
    <citation type="journal article" date="2000" name="DNA Res.">
        <title>Structural analysis of Arabidopsis thaliana chromosome 3. I. Sequence features of the regions of 4,504,864 bp covered by sixty P1 and TAC clones.</title>
        <authorList>
            <person name="Sato S."/>
            <person name="Nakamura Y."/>
            <person name="Kaneko T."/>
            <person name="Katoh T."/>
            <person name="Asamizu E."/>
            <person name="Tabata S."/>
        </authorList>
    </citation>
    <scope>NUCLEOTIDE SEQUENCE [LARGE SCALE GENOMIC DNA]</scope>
    <source>
        <strain>cv. Columbia</strain>
    </source>
</reference>
<reference key="4">
    <citation type="journal article" date="2017" name="Plant J.">
        <title>Araport11: a complete reannotation of the Arabidopsis thaliana reference genome.</title>
        <authorList>
            <person name="Cheng C.Y."/>
            <person name="Krishnakumar V."/>
            <person name="Chan A.P."/>
            <person name="Thibaud-Nissen F."/>
            <person name="Schobel S."/>
            <person name="Town C.D."/>
        </authorList>
    </citation>
    <scope>GENOME REANNOTATION</scope>
    <source>
        <strain>cv. Columbia</strain>
    </source>
</reference>
<reference key="5">
    <citation type="submission" date="2005-05" db="EMBL/GenBank/DDBJ databases">
        <authorList>
            <person name="Underwood B.A."/>
            <person name="Xiao Y.-L."/>
            <person name="Moskal W.A. Jr."/>
            <person name="Monaghan E.L."/>
            <person name="Wang W."/>
            <person name="Redman J.C."/>
            <person name="Wu H.C."/>
            <person name="Utterback T."/>
            <person name="Town C.D."/>
        </authorList>
    </citation>
    <scope>NUCLEOTIDE SEQUENCE [LARGE SCALE MRNA]</scope>
    <source>
        <strain>cv. Columbia</strain>
    </source>
</reference>
<reference key="6">
    <citation type="journal article" date="2002" name="Plant Physiol.">
        <title>The LATERAL ORGAN BOUNDARIES gene defines a novel, plant-specific gene family.</title>
        <authorList>
            <person name="Shuai B."/>
            <person name="Reynaga-Pena C.G."/>
            <person name="Springer P.S."/>
        </authorList>
    </citation>
    <scope>GENE FAMILY</scope>
    <scope>NOMENCLATURE</scope>
</reference>
<reference key="7">
    <citation type="journal article" date="2002" name="Plant Cell Physiol.">
        <title>The ASYMMETRIC LEAVES2 gene of Arabidopsis thaliana, required for formation of a symmetric flat leaf lamina, encodes a member of a novel family of proteins characterized by cysteine repeats and a leucine zipper.</title>
        <authorList>
            <person name="Iwakawa H."/>
            <person name="Ueno Y."/>
            <person name="Semiarti E."/>
            <person name="Onouchi H."/>
            <person name="Kojima S."/>
            <person name="Tsukaya H."/>
            <person name="Hasebe M."/>
            <person name="Soma T."/>
            <person name="Ikezaki M."/>
            <person name="Machida C."/>
            <person name="Machida Y."/>
        </authorList>
    </citation>
    <scope>GENE FAMILY</scope>
    <scope>NOMENCLATURE</scope>
</reference>
<proteinExistence type="evidence at protein level"/>
<organism>
    <name type="scientific">Arabidopsis thaliana</name>
    <name type="common">Mouse-ear cress</name>
    <dbReference type="NCBI Taxonomy" id="3702"/>
    <lineage>
        <taxon>Eukaryota</taxon>
        <taxon>Viridiplantae</taxon>
        <taxon>Streptophyta</taxon>
        <taxon>Embryophyta</taxon>
        <taxon>Tracheophyta</taxon>
        <taxon>Spermatophyta</taxon>
        <taxon>Magnoliopsida</taxon>
        <taxon>eudicotyledons</taxon>
        <taxon>Gunneridae</taxon>
        <taxon>Pentapetalae</taxon>
        <taxon>rosids</taxon>
        <taxon>malvids</taxon>
        <taxon>Brassicales</taxon>
        <taxon>Brassicaceae</taxon>
        <taxon>Camelineae</taxon>
        <taxon>Arabidopsis</taxon>
    </lineage>
</organism>
<protein>
    <recommendedName>
        <fullName>LOB domain-containing protein 23</fullName>
    </recommendedName>
    <alternativeName>
        <fullName>ASYMMETRIC LEAVES 2-like protein 14</fullName>
        <shortName>AS2-like protein 14</shortName>
    </alternativeName>
</protein>
<dbReference type="EMBL" id="AB473847">
    <property type="protein sequence ID" value="BAH10558.1"/>
    <property type="molecule type" value="mRNA"/>
</dbReference>
<dbReference type="EMBL" id="X98130">
    <property type="status" value="NOT_ANNOTATED_CDS"/>
    <property type="molecule type" value="Genomic_DNA"/>
</dbReference>
<dbReference type="EMBL" id="AB026648">
    <property type="status" value="NOT_ANNOTATED_CDS"/>
    <property type="molecule type" value="Genomic_DNA"/>
</dbReference>
<dbReference type="EMBL" id="CP002686">
    <property type="protein sequence ID" value="AEE77188.1"/>
    <property type="molecule type" value="Genomic_DNA"/>
</dbReference>
<dbReference type="EMBL" id="DQ056609">
    <property type="protein sequence ID" value="AAY78757.1"/>
    <property type="molecule type" value="mRNA"/>
</dbReference>
<dbReference type="RefSeq" id="NP_189296.1">
    <property type="nucleotide sequence ID" value="NM_113573.4"/>
</dbReference>
<dbReference type="SMR" id="P59467"/>
<dbReference type="BioGRID" id="7604">
    <property type="interactions" value="18"/>
</dbReference>
<dbReference type="IntAct" id="P59467">
    <property type="interactions" value="18"/>
</dbReference>
<dbReference type="STRING" id="3702.P59467"/>
<dbReference type="PaxDb" id="3702-AT3G26620.1"/>
<dbReference type="EnsemblPlants" id="AT3G26620.1">
    <property type="protein sequence ID" value="AT3G26620.1"/>
    <property type="gene ID" value="AT3G26620"/>
</dbReference>
<dbReference type="GeneID" id="822274"/>
<dbReference type="Gramene" id="AT3G26620.1">
    <property type="protein sequence ID" value="AT3G26620.1"/>
    <property type="gene ID" value="AT3G26620"/>
</dbReference>
<dbReference type="KEGG" id="ath:AT3G26620"/>
<dbReference type="Araport" id="AT3G26620"/>
<dbReference type="TAIR" id="AT3G26620">
    <property type="gene designation" value="LBD23"/>
</dbReference>
<dbReference type="eggNOG" id="ENOG502S2P2">
    <property type="taxonomic scope" value="Eukaryota"/>
</dbReference>
<dbReference type="HOGENOM" id="CLU_058353_6_1_1"/>
<dbReference type="InParanoid" id="P59467"/>
<dbReference type="OMA" id="HKFACIH"/>
<dbReference type="OrthoDB" id="684652at2759"/>
<dbReference type="PhylomeDB" id="P59467"/>
<dbReference type="PRO" id="PR:P59467"/>
<dbReference type="Proteomes" id="UP000006548">
    <property type="component" value="Chromosome 3"/>
</dbReference>
<dbReference type="ExpressionAtlas" id="P59467">
    <property type="expression patterns" value="baseline and differential"/>
</dbReference>
<dbReference type="InterPro" id="IPR004883">
    <property type="entry name" value="LOB"/>
</dbReference>
<dbReference type="PANTHER" id="PTHR31301:SF120">
    <property type="entry name" value="LOB DOMAIN-CONTAINING PROTEIN 23-RELATED"/>
    <property type="match status" value="1"/>
</dbReference>
<dbReference type="PANTHER" id="PTHR31301">
    <property type="entry name" value="LOB DOMAIN-CONTAINING PROTEIN 4-RELATED"/>
    <property type="match status" value="1"/>
</dbReference>
<dbReference type="Pfam" id="PF03195">
    <property type="entry name" value="LOB"/>
    <property type="match status" value="1"/>
</dbReference>
<dbReference type="PROSITE" id="PS50891">
    <property type="entry name" value="LOB"/>
    <property type="match status" value="1"/>
</dbReference>